<keyword id="KW-0025">Alternative splicing</keyword>
<keyword id="KW-1003">Cell membrane</keyword>
<keyword id="KW-0963">Cytoplasm</keyword>
<keyword id="KW-0341">Growth regulation</keyword>
<keyword id="KW-0472">Membrane</keyword>
<keyword id="KW-0539">Nucleus</keyword>
<keyword id="KW-1267">Proteomics identification</keyword>
<keyword id="KW-1185">Reference proteome</keyword>
<keyword id="KW-0727">SH2 domain</keyword>
<keyword id="KW-0734">Signal transduction inhibitor</keyword>
<keyword id="KW-0833">Ubl conjugation pathway</keyword>
<name>SOCS7_HUMAN</name>
<dbReference type="EMBL" id="AB005216">
    <property type="protein sequence ID" value="BAA22432.1"/>
    <property type="status" value="ALT_SEQ"/>
    <property type="molecule type" value="mRNA"/>
</dbReference>
<dbReference type="EMBL" id="AC115992">
    <property type="status" value="NOT_ANNOTATED_CDS"/>
    <property type="molecule type" value="Genomic_DNA"/>
</dbReference>
<dbReference type="EMBL" id="AC124789">
    <property type="status" value="NOT_ANNOTATED_CDS"/>
    <property type="molecule type" value="Genomic_DNA"/>
</dbReference>
<dbReference type="EMBL" id="BC128607">
    <property type="protein sequence ID" value="AAI28608.1"/>
    <property type="status" value="ALT_SEQ"/>
    <property type="molecule type" value="mRNA"/>
</dbReference>
<dbReference type="PIR" id="PC4427">
    <property type="entry name" value="PC4427"/>
</dbReference>
<dbReference type="RefSeq" id="NP_055413.1">
    <property type="nucleotide sequence ID" value="NM_014598.3"/>
</dbReference>
<dbReference type="SMR" id="O14512"/>
<dbReference type="BioGRID" id="119053">
    <property type="interactions" value="52"/>
</dbReference>
<dbReference type="FunCoup" id="O14512">
    <property type="interactions" value="625"/>
</dbReference>
<dbReference type="IntAct" id="O14512">
    <property type="interactions" value="31"/>
</dbReference>
<dbReference type="MINT" id="O14512"/>
<dbReference type="STRING" id="9606.ENSP00000499750"/>
<dbReference type="GlyGen" id="O14512">
    <property type="glycosylation" value="3 sites, 1 O-linked glycan (1 site)"/>
</dbReference>
<dbReference type="iPTMnet" id="O14512"/>
<dbReference type="PhosphoSitePlus" id="O14512"/>
<dbReference type="BioMuta" id="SOCS7"/>
<dbReference type="jPOST" id="O14512"/>
<dbReference type="MassIVE" id="O14512"/>
<dbReference type="PaxDb" id="9606-ENSP00000482229"/>
<dbReference type="PeptideAtlas" id="O14512"/>
<dbReference type="ProteomicsDB" id="48055">
    <molecule id="O14512-1"/>
</dbReference>
<dbReference type="ProteomicsDB" id="48056">
    <molecule id="O14512-2"/>
</dbReference>
<dbReference type="Antibodypedia" id="72315">
    <property type="antibodies" value="211 antibodies from 30 providers"/>
</dbReference>
<dbReference type="DNASU" id="30837"/>
<dbReference type="Ensembl" id="ENST00000615473.2">
    <molecule id="O14512-1"/>
    <property type="protein sequence ID" value="ENSP00000480736.1"/>
    <property type="gene ID" value="ENSG00000274229.2"/>
</dbReference>
<dbReference type="Ensembl" id="ENST00000665913.1">
    <molecule id="O14512-1"/>
    <property type="protein sequence ID" value="ENSP00000499750.1"/>
    <property type="gene ID" value="ENSG00000274211.6"/>
</dbReference>
<dbReference type="GeneID" id="30837"/>
<dbReference type="KEGG" id="hsa:30837"/>
<dbReference type="UCSC" id="uc002hqa.4">
    <molecule id="O14512-1"/>
    <property type="organism name" value="human"/>
</dbReference>
<dbReference type="AGR" id="HGNC:29846"/>
<dbReference type="CTD" id="30837"/>
<dbReference type="DisGeNET" id="30837"/>
<dbReference type="GeneCards" id="SOCS7"/>
<dbReference type="HGNC" id="HGNC:29846">
    <property type="gene designation" value="SOCS7"/>
</dbReference>
<dbReference type="HPA" id="ENSG00000274211">
    <property type="expression patterns" value="Group enriched (brain, testis)"/>
</dbReference>
<dbReference type="MIM" id="608788">
    <property type="type" value="gene"/>
</dbReference>
<dbReference type="neXtProt" id="NX_O14512"/>
<dbReference type="OpenTargets" id="ENSG00000274211"/>
<dbReference type="PharmGKB" id="PA164742488"/>
<dbReference type="VEuPathDB" id="HostDB:ENSG00000274211"/>
<dbReference type="eggNOG" id="KOG4566">
    <property type="taxonomic scope" value="Eukaryota"/>
</dbReference>
<dbReference type="GeneTree" id="ENSGT00940000156314"/>
<dbReference type="InParanoid" id="O14512"/>
<dbReference type="OrthoDB" id="5979828at2759"/>
<dbReference type="PAN-GO" id="O14512">
    <property type="GO annotations" value="3 GO annotations based on evolutionary models"/>
</dbReference>
<dbReference type="PhylomeDB" id="O14512"/>
<dbReference type="TreeFam" id="TF321368"/>
<dbReference type="PathwayCommons" id="O14512"/>
<dbReference type="SignaLink" id="O14512"/>
<dbReference type="UniPathway" id="UPA00143"/>
<dbReference type="BioGRID-ORCS" id="30837">
    <property type="hits" value="13 hits in 1186 CRISPR screens"/>
</dbReference>
<dbReference type="ChiTaRS" id="SOCS7">
    <property type="organism name" value="human"/>
</dbReference>
<dbReference type="GeneWiki" id="SOCS7"/>
<dbReference type="GenomeRNAi" id="30837"/>
<dbReference type="Pharos" id="O14512">
    <property type="development level" value="Tbio"/>
</dbReference>
<dbReference type="PRO" id="PR:O14512"/>
<dbReference type="Proteomes" id="UP000005640">
    <property type="component" value="Chromosome 17"/>
</dbReference>
<dbReference type="RNAct" id="O14512">
    <property type="molecule type" value="protein"/>
</dbReference>
<dbReference type="Bgee" id="ENSG00000274211">
    <property type="expression patterns" value="Expressed in right testis and 111 other cell types or tissues"/>
</dbReference>
<dbReference type="ExpressionAtlas" id="O14512">
    <property type="expression patterns" value="baseline and differential"/>
</dbReference>
<dbReference type="GO" id="GO:0031466">
    <property type="term" value="C:Cul5-RING ubiquitin ligase complex"/>
    <property type="evidence" value="ECO:0000250"/>
    <property type="project" value="UniProtKB"/>
</dbReference>
<dbReference type="GO" id="GO:0005737">
    <property type="term" value="C:cytoplasm"/>
    <property type="evidence" value="ECO:0000314"/>
    <property type="project" value="UniProt"/>
</dbReference>
<dbReference type="GO" id="GO:0005829">
    <property type="term" value="C:cytosol"/>
    <property type="evidence" value="ECO:0000314"/>
    <property type="project" value="HPA"/>
</dbReference>
<dbReference type="GO" id="GO:0005634">
    <property type="term" value="C:nucleus"/>
    <property type="evidence" value="ECO:0007669"/>
    <property type="project" value="UniProtKB-SubCell"/>
</dbReference>
<dbReference type="GO" id="GO:0005886">
    <property type="term" value="C:plasma membrane"/>
    <property type="evidence" value="ECO:0007669"/>
    <property type="project" value="UniProtKB-SubCell"/>
</dbReference>
<dbReference type="GO" id="GO:0140031">
    <property type="term" value="F:phosphorylation-dependent protein binding"/>
    <property type="evidence" value="ECO:0000250"/>
    <property type="project" value="UniProtKB"/>
</dbReference>
<dbReference type="GO" id="GO:0017124">
    <property type="term" value="F:SH3 domain binding"/>
    <property type="evidence" value="ECO:0000303"/>
    <property type="project" value="UniProtKB"/>
</dbReference>
<dbReference type="GO" id="GO:0035591">
    <property type="term" value="F:signaling adaptor activity"/>
    <property type="evidence" value="ECO:0000318"/>
    <property type="project" value="GO_Central"/>
</dbReference>
<dbReference type="GO" id="GO:1990756">
    <property type="term" value="F:ubiquitin-like ligase-substrate adaptor activity"/>
    <property type="evidence" value="ECO:0000250"/>
    <property type="project" value="UniProtKB"/>
</dbReference>
<dbReference type="GO" id="GO:0008286">
    <property type="term" value="P:insulin receptor signaling pathway"/>
    <property type="evidence" value="ECO:0000318"/>
    <property type="project" value="GO_Central"/>
</dbReference>
<dbReference type="GO" id="GO:0035556">
    <property type="term" value="P:intracellular signal transduction"/>
    <property type="evidence" value="ECO:0007669"/>
    <property type="project" value="InterPro"/>
</dbReference>
<dbReference type="GO" id="GO:0021819">
    <property type="term" value="P:layer formation in cerebral cortex"/>
    <property type="evidence" value="ECO:0000250"/>
    <property type="project" value="UniProtKB"/>
</dbReference>
<dbReference type="GO" id="GO:0009968">
    <property type="term" value="P:negative regulation of signal transduction"/>
    <property type="evidence" value="ECO:0007669"/>
    <property type="project" value="UniProtKB-KW"/>
</dbReference>
<dbReference type="GO" id="GO:0043161">
    <property type="term" value="P:proteasome-mediated ubiquitin-dependent protein catabolic process"/>
    <property type="evidence" value="ECO:0000250"/>
    <property type="project" value="UniProtKB"/>
</dbReference>
<dbReference type="GO" id="GO:0016567">
    <property type="term" value="P:protein ubiquitination"/>
    <property type="evidence" value="ECO:0007669"/>
    <property type="project" value="UniProtKB-UniPathway"/>
</dbReference>
<dbReference type="GO" id="GO:2001222">
    <property type="term" value="P:regulation of neuron migration"/>
    <property type="evidence" value="ECO:0000250"/>
    <property type="project" value="UniProt"/>
</dbReference>
<dbReference type="CDD" id="cd10388">
    <property type="entry name" value="SH2_SOCS7"/>
    <property type="match status" value="1"/>
</dbReference>
<dbReference type="CDD" id="cd03741">
    <property type="entry name" value="SOCS_SOCS7"/>
    <property type="match status" value="1"/>
</dbReference>
<dbReference type="FunFam" id="3.30.505.10:FF:000029">
    <property type="entry name" value="Suppressor of cytokine signaling 7"/>
    <property type="match status" value="1"/>
</dbReference>
<dbReference type="Gene3D" id="3.30.505.10">
    <property type="entry name" value="SH2 domain"/>
    <property type="match status" value="1"/>
</dbReference>
<dbReference type="InterPro" id="IPR000980">
    <property type="entry name" value="SH2"/>
</dbReference>
<dbReference type="InterPro" id="IPR036860">
    <property type="entry name" value="SH2_dom_sf"/>
</dbReference>
<dbReference type="InterPro" id="IPR035866">
    <property type="entry name" value="SOCS7_SH2"/>
</dbReference>
<dbReference type="InterPro" id="IPR037346">
    <property type="entry name" value="SOCS7_SOCS"/>
</dbReference>
<dbReference type="InterPro" id="IPR001496">
    <property type="entry name" value="SOCS_box"/>
</dbReference>
<dbReference type="InterPro" id="IPR036036">
    <property type="entry name" value="SOCS_box-like_dom_sf"/>
</dbReference>
<dbReference type="PANTHER" id="PTHR10155">
    <property type="entry name" value="PHOSPHATIDYLINOSITOL 3-KINASE REGULATORY SUBUNIT"/>
    <property type="match status" value="1"/>
</dbReference>
<dbReference type="PANTHER" id="PTHR10155:SF5">
    <property type="entry name" value="SUPPRESSOR OF CYTOKINE SIGNALING 7"/>
    <property type="match status" value="1"/>
</dbReference>
<dbReference type="Pfam" id="PF00017">
    <property type="entry name" value="SH2"/>
    <property type="match status" value="1"/>
</dbReference>
<dbReference type="Pfam" id="PF07525">
    <property type="entry name" value="SOCS_box"/>
    <property type="match status" value="1"/>
</dbReference>
<dbReference type="SMART" id="SM00252">
    <property type="entry name" value="SH2"/>
    <property type="match status" value="1"/>
</dbReference>
<dbReference type="SMART" id="SM00253">
    <property type="entry name" value="SOCS"/>
    <property type="match status" value="1"/>
</dbReference>
<dbReference type="SMART" id="SM00969">
    <property type="entry name" value="SOCS_box"/>
    <property type="match status" value="1"/>
</dbReference>
<dbReference type="SUPFAM" id="SSF55550">
    <property type="entry name" value="SH2 domain"/>
    <property type="match status" value="1"/>
</dbReference>
<dbReference type="SUPFAM" id="SSF158235">
    <property type="entry name" value="SOCS box-like"/>
    <property type="match status" value="1"/>
</dbReference>
<dbReference type="PROSITE" id="PS50001">
    <property type="entry name" value="SH2"/>
    <property type="match status" value="1"/>
</dbReference>
<dbReference type="PROSITE" id="PS50225">
    <property type="entry name" value="SOCS"/>
    <property type="match status" value="1"/>
</dbReference>
<proteinExistence type="evidence at protein level"/>
<protein>
    <recommendedName>
        <fullName evidence="14">Suppressor of cytokine signaling 7</fullName>
        <shortName evidence="11">SOCS-7</shortName>
    </recommendedName>
    <alternativeName>
        <fullName evidence="13">Nck, Ash and phospholipase C gamma-binding protein</fullName>
    </alternativeName>
    <alternativeName>
        <fullName evidence="13">Nck-associated protein 4</fullName>
        <shortName evidence="13">NAP-4</shortName>
    </alternativeName>
</protein>
<comment type="function">
    <text evidence="1 7 8">Substrate-recognition component of a cullin-5-RING E3 ubiquitin-protein ligase complex (ECS complex, also named CRL5 complex), which mediates the ubiquitination and subsequent proteasomal degradation of target proteins, such as DAB1 and IRS1 (PubMed:16127460). Specifically recognizes and binds phosphorylated proteins via its SH2 domain, promoting their ubiquitination (By similarity). The ECS(SOCS7) complex acts as a key regulator of reelin signaling by mediating ubiquitination and degradation of phosphorylated DAB1 in the cortical plate of the developing cerebral cortex, thereby regulating neuron positioning during cortex development (By similarity). Functions in insulin signaling and glucose homeostasis through IRS1 ubiquitination and subsequent proteasomal degradation (PubMed:16127460). Also inhibits prolactin, growth hormone and leptin signaling by preventing STAT3 and STAT5 activation, sequestering them in the cytoplasm and reducing their binding to DNA (PubMed:15677474).</text>
</comment>
<comment type="pathway">
    <text evidence="8">Protein modification; protein ubiquitination.</text>
</comment>
<comment type="subunit">
    <text evidence="1 6 7 8 9 10">Substrate-recognition component of the ECS(SOCS7) complex, composed of SOCS7, CUL5, ELOB, ELOC and RNF7/RBX2 (PubMed:16127460). Interacts, via the third proline-rich region, with the second SH3 domain of the adapter protein NCK1 (PubMed:9344857). Also interacts with GRB2, INSR, PLCG1, SORBS3/vinexin, and phosphorylated STAT3 and STAT5 (PubMed:15242778, PubMed:15677474, PubMed:16127460). Interacts with SEPT6 (PubMed:17803907). Interacts with phosphorylated IRS4 and PIK3R1 (By similarity).</text>
</comment>
<comment type="interaction">
    <interactant intactId="EBI-1539606">
        <id>O14512</id>
    </interactant>
    <interactant intactId="EBI-375446">
        <id>Q8IZP0</id>
        <label>ABI1</label>
    </interactant>
    <organismsDiffer>false</organismsDiffer>
    <experiments>2</experiments>
</comment>
<comment type="interaction">
    <interactant intactId="EBI-1539606">
        <id>O14512</id>
    </interactant>
    <interactant intactId="EBI-3867333">
        <id>A8MQ03</id>
        <label>CYSRT1</label>
    </interactant>
    <organismsDiffer>false</organismsDiffer>
    <experiments>3</experiments>
</comment>
<comment type="interaction">
    <interactant intactId="EBI-1539606">
        <id>O14512</id>
    </interactant>
    <interactant intactId="EBI-371922">
        <id>Q96B26</id>
        <label>EXOSC8</label>
    </interactant>
    <organismsDiffer>false</organismsDiffer>
    <experiments>3</experiments>
</comment>
<comment type="interaction">
    <interactant intactId="EBI-1539606">
        <id>O14512</id>
    </interactant>
    <interactant intactId="EBI-7960826">
        <id>Q8NHY3</id>
        <label>GAS2L2</label>
    </interactant>
    <organismsDiffer>false</organismsDiffer>
    <experiments>3</experiments>
</comment>
<comment type="interaction">
    <interactant intactId="EBI-1539606">
        <id>O14512</id>
    </interactant>
    <interactant intactId="EBI-401755">
        <id>P62993</id>
        <label>GRB2</label>
    </interactant>
    <organismsDiffer>false</organismsDiffer>
    <experiments>3</experiments>
</comment>
<comment type="interaction">
    <interactant intactId="EBI-1539606">
        <id>O14512</id>
    </interactant>
    <interactant intactId="EBI-739074">
        <id>Q9UJY1</id>
        <label>HSPB8</label>
    </interactant>
    <organismsDiffer>false</organismsDiffer>
    <experiments>3</experiments>
</comment>
<comment type="interaction">
    <interactant intactId="EBI-1539606">
        <id>O14512</id>
    </interactant>
    <interactant intactId="EBI-739546">
        <id>Q96PV6</id>
        <label>LENG8</label>
    </interactant>
    <organismsDiffer>false</organismsDiffer>
    <experiments>3</experiments>
</comment>
<comment type="interaction">
    <interactant intactId="EBI-1539606">
        <id>O14512</id>
    </interactant>
    <interactant intactId="EBI-724076">
        <id>Q99750</id>
        <label>MDFI</label>
    </interactant>
    <organismsDiffer>false</organismsDiffer>
    <experiments>3</experiments>
</comment>
<comment type="interaction">
    <interactant intactId="EBI-1539606">
        <id>O14512</id>
    </interactant>
    <interactant intactId="EBI-2555085">
        <id>Q8IVT2</id>
        <label>MISP</label>
    </interactant>
    <organismsDiffer>false</organismsDiffer>
    <experiments>3</experiments>
</comment>
<comment type="interaction">
    <interactant intactId="EBI-1539606">
        <id>O14512</id>
    </interactant>
    <interactant intactId="EBI-713635">
        <id>O43639</id>
        <label>NCK2</label>
    </interactant>
    <organismsDiffer>false</organismsDiffer>
    <experiments>4</experiments>
</comment>
<comment type="interaction">
    <interactant intactId="EBI-1539606">
        <id>O14512</id>
    </interactant>
    <interactant intactId="EBI-12028784">
        <id>Q6X4W1-2</id>
        <label>NSMF</label>
    </interactant>
    <organismsDiffer>false</organismsDiffer>
    <experiments>3</experiments>
</comment>
<comment type="interaction">
    <interactant intactId="EBI-1539606">
        <id>O14512</id>
    </interactant>
    <interactant intactId="EBI-12037893">
        <id>O94875-10</id>
        <label>SORBS2</label>
    </interactant>
    <organismsDiffer>false</organismsDiffer>
    <experiments>3</experiments>
</comment>
<comment type="interaction">
    <interactant intactId="EBI-1539606">
        <id>O14512</id>
    </interactant>
    <interactant intactId="EBI-741237">
        <id>O60504</id>
        <label>SORBS3</label>
    </interactant>
    <organismsDiffer>false</organismsDiffer>
    <experiments>3</experiments>
</comment>
<comment type="interaction">
    <interactant intactId="EBI-1539606">
        <id>O14512</id>
    </interactant>
    <interactant intactId="EBI-949753">
        <id>Q63HR2</id>
        <label>TNS2</label>
    </interactant>
    <organismsDiffer>false</organismsDiffer>
    <experiments>3</experiments>
</comment>
<comment type="interaction">
    <interactant intactId="EBI-1539606">
        <id>O14512</id>
    </interactant>
    <interactant intactId="EBI-515331">
        <id>P07947</id>
        <label>YES1</label>
    </interactant>
    <organismsDiffer>false</organismsDiffer>
    <experiments>3</experiments>
</comment>
<comment type="interaction">
    <interactant intactId="EBI-1539617">
        <id>O14512-1</id>
    </interactant>
    <interactant intactId="EBI-745901">
        <id>Q14141</id>
        <label>SEPTIN6</label>
    </interactant>
    <organismsDiffer>false</organismsDiffer>
    <experiments>2</experiments>
</comment>
<comment type="subcellular location">
    <subcellularLocation>
        <location evidence="6 9">Cytoplasm</location>
    </subcellularLocation>
    <subcellularLocation>
        <location evidence="9">Nucleus</location>
    </subcellularLocation>
    <subcellularLocation>
        <location>Cell membrane</location>
        <topology>Peripheral membrane protein</topology>
        <orientation evidence="6">Cytoplasmic side</orientation>
    </subcellularLocation>
    <text evidence="9">Mostly cytoplasmic, but shuttles between the cytoplasm and the nucleus (PubMed:17803907). Rapidly relocalizes to the nucleus after UV irradiation (PubMed:17803907). Cytoplasmic location depends upon SEPT7 presence (PubMed:17803907).</text>
</comment>
<comment type="alternative products">
    <event type="alternative splicing"/>
    <isoform>
        <id>O14512-1</id>
        <name>1</name>
        <sequence type="displayed"/>
    </isoform>
    <isoform>
        <id>O14512-2</id>
        <name>2</name>
        <sequence type="described" ref="VSP_021645"/>
    </isoform>
</comment>
<comment type="tissue specificity">
    <text evidence="10">Expressed in brain and leukocytes (PubMed:9344857). Also in fetal lung fibroblasts and fetal brain (PubMed:9344857).</text>
</comment>
<comment type="induction">
    <text evidence="5">By IL6/interleukin-6, prolactin and growth hormone.</text>
</comment>
<comment type="domain">
    <text evidence="1">The SOCS box domain mediates the interaction with the Elongin BC complex, an adapter module in different E3 ubiquitin ligase complexes.</text>
</comment>
<comment type="sequence caution" evidence="14">
    <conflict type="miscellaneous discrepancy">
        <sequence resource="EMBL-CDS" id="AAI28608"/>
    </conflict>
    <text>Contaminating sequence. The N-terminus may be contaminated with vector sequence.</text>
</comment>
<comment type="sequence caution" evidence="14">
    <conflict type="erroneous termination">
        <sequence resource="EMBL-CDS" id="BAA22432"/>
    </conflict>
    <text>Extended C-terminus.</text>
</comment>
<evidence type="ECO:0000250" key="1">
    <source>
        <dbReference type="UniProtKB" id="Q8VHQ2"/>
    </source>
</evidence>
<evidence type="ECO:0000255" key="2">
    <source>
        <dbReference type="PROSITE-ProRule" id="PRU00191"/>
    </source>
</evidence>
<evidence type="ECO:0000255" key="3">
    <source>
        <dbReference type="PROSITE-ProRule" id="PRU00194"/>
    </source>
</evidence>
<evidence type="ECO:0000256" key="4">
    <source>
        <dbReference type="SAM" id="MobiDB-lite"/>
    </source>
</evidence>
<evidence type="ECO:0000269" key="5">
    <source>
    </source>
</evidence>
<evidence type="ECO:0000269" key="6">
    <source>
    </source>
</evidence>
<evidence type="ECO:0000269" key="7">
    <source>
    </source>
</evidence>
<evidence type="ECO:0000269" key="8">
    <source>
    </source>
</evidence>
<evidence type="ECO:0000269" key="9">
    <source>
    </source>
</evidence>
<evidence type="ECO:0000269" key="10">
    <source>
    </source>
</evidence>
<evidence type="ECO:0000303" key="11">
    <source>
    </source>
</evidence>
<evidence type="ECO:0000303" key="12">
    <source>
    </source>
</evidence>
<evidence type="ECO:0000303" key="13">
    <source>
    </source>
</evidence>
<evidence type="ECO:0000305" key="14"/>
<evidence type="ECO:0000312" key="15">
    <source>
        <dbReference type="HGNC" id="HGNC:29846"/>
    </source>
</evidence>
<accession>O14512</accession>
<accession>A2VCU2</accession>
<accession>Q0IJ63</accession>
<feature type="chain" id="PRO_0000181253" description="Suppressor of cytokine signaling 7">
    <location>
        <begin position="1"/>
        <end position="581"/>
    </location>
</feature>
<feature type="domain" description="SH2" evidence="2">
    <location>
        <begin position="400"/>
        <end position="509"/>
    </location>
</feature>
<feature type="domain" description="SOCS box" evidence="3">
    <location>
        <begin position="504"/>
        <end position="554"/>
    </location>
</feature>
<feature type="region of interest" description="Disordered" evidence="4">
    <location>
        <begin position="1"/>
        <end position="23"/>
    </location>
</feature>
<feature type="region of interest" description="Disordered" evidence="4">
    <location>
        <begin position="89"/>
        <end position="109"/>
    </location>
</feature>
<feature type="region of interest" description="Disordered" evidence="4">
    <location>
        <begin position="123"/>
        <end position="272"/>
    </location>
</feature>
<feature type="region of interest" description="Mediates interaction with SORBS3" evidence="6">
    <location>
        <begin position="124"/>
        <end position="494"/>
    </location>
</feature>
<feature type="region of interest" description="Disordered" evidence="4">
    <location>
        <begin position="297"/>
        <end position="316"/>
    </location>
</feature>
<feature type="compositionally biased region" description="Pro residues" evidence="4">
    <location>
        <begin position="89"/>
        <end position="99"/>
    </location>
</feature>
<feature type="compositionally biased region" description="Pro residues" evidence="4">
    <location>
        <begin position="154"/>
        <end position="164"/>
    </location>
</feature>
<feature type="compositionally biased region" description="Pro residues" evidence="4">
    <location>
        <begin position="187"/>
        <end position="198"/>
    </location>
</feature>
<feature type="compositionally biased region" description="Basic residues" evidence="4">
    <location>
        <begin position="208"/>
        <end position="219"/>
    </location>
</feature>
<feature type="compositionally biased region" description="Pro residues" evidence="4">
    <location>
        <begin position="303"/>
        <end position="313"/>
    </location>
</feature>
<feature type="splice variant" id="VSP_021645" description="In isoform 2." evidence="13">
    <location>
        <begin position="1"/>
        <end position="250"/>
    </location>
</feature>
<feature type="mutagenesis site" description="Loss of IRS1 ubiquitination and degradation." evidence="8">
    <original>RDS</original>
    <variation>KDC</variation>
    <location>
        <begin position="425"/>
        <end position="427"/>
    </location>
</feature>
<feature type="sequence conflict" description="In Ref. 3; AAI28608." evidence="14" ref="3">
    <original>P</original>
    <variation>S</variation>
    <location>
        <position position="357"/>
    </location>
</feature>
<organism>
    <name type="scientific">Homo sapiens</name>
    <name type="common">Human</name>
    <dbReference type="NCBI Taxonomy" id="9606"/>
    <lineage>
        <taxon>Eukaryota</taxon>
        <taxon>Metazoa</taxon>
        <taxon>Chordata</taxon>
        <taxon>Craniata</taxon>
        <taxon>Vertebrata</taxon>
        <taxon>Euteleostomi</taxon>
        <taxon>Mammalia</taxon>
        <taxon>Eutheria</taxon>
        <taxon>Euarchontoglires</taxon>
        <taxon>Primates</taxon>
        <taxon>Haplorrhini</taxon>
        <taxon>Catarrhini</taxon>
        <taxon>Hominidae</taxon>
        <taxon>Homo</taxon>
    </lineage>
</organism>
<reference key="1">
    <citation type="journal article" date="1997" name="Biochem. Biophys. Res. Commun.">
        <title>A novel ligand for an SH3 domain of the adaptor protein Nck bears an SH2 domain and nuclear signaling motifs.</title>
        <authorList>
            <person name="Matuoka K."/>
            <person name="Miki H."/>
            <person name="Takahashi K."/>
            <person name="Takenawa T."/>
        </authorList>
    </citation>
    <scope>NUCLEOTIDE SEQUENCE [MRNA] (ISOFORM 2)</scope>
    <scope>TISSUE SPECIFICITY</scope>
    <scope>INTERACTION WITH NCK1; GRB2 AND PLCG1</scope>
    <source>
        <tissue>Brain</tissue>
    </source>
</reference>
<reference key="2">
    <citation type="journal article" date="2006" name="Nature">
        <title>DNA sequence of human chromosome 17 and analysis of rearrangement in the human lineage.</title>
        <authorList>
            <person name="Zody M.C."/>
            <person name="Garber M."/>
            <person name="Adams D.J."/>
            <person name="Sharpe T."/>
            <person name="Harrow J."/>
            <person name="Lupski J.R."/>
            <person name="Nicholson C."/>
            <person name="Searle S.M."/>
            <person name="Wilming L."/>
            <person name="Young S.K."/>
            <person name="Abouelleil A."/>
            <person name="Allen N.R."/>
            <person name="Bi W."/>
            <person name="Bloom T."/>
            <person name="Borowsky M.L."/>
            <person name="Bugalter B.E."/>
            <person name="Butler J."/>
            <person name="Chang J.L."/>
            <person name="Chen C.-K."/>
            <person name="Cook A."/>
            <person name="Corum B."/>
            <person name="Cuomo C.A."/>
            <person name="de Jong P.J."/>
            <person name="DeCaprio D."/>
            <person name="Dewar K."/>
            <person name="FitzGerald M."/>
            <person name="Gilbert J."/>
            <person name="Gibson R."/>
            <person name="Gnerre S."/>
            <person name="Goldstein S."/>
            <person name="Grafham D.V."/>
            <person name="Grocock R."/>
            <person name="Hafez N."/>
            <person name="Hagopian D.S."/>
            <person name="Hart E."/>
            <person name="Norman C.H."/>
            <person name="Humphray S."/>
            <person name="Jaffe D.B."/>
            <person name="Jones M."/>
            <person name="Kamal M."/>
            <person name="Khodiyar V.K."/>
            <person name="LaButti K."/>
            <person name="Laird G."/>
            <person name="Lehoczky J."/>
            <person name="Liu X."/>
            <person name="Lokyitsang T."/>
            <person name="Loveland J."/>
            <person name="Lui A."/>
            <person name="Macdonald P."/>
            <person name="Major J.E."/>
            <person name="Matthews L."/>
            <person name="Mauceli E."/>
            <person name="McCarroll S.A."/>
            <person name="Mihalev A.H."/>
            <person name="Mudge J."/>
            <person name="Nguyen C."/>
            <person name="Nicol R."/>
            <person name="O'Leary S.B."/>
            <person name="Osoegawa K."/>
            <person name="Schwartz D.C."/>
            <person name="Shaw-Smith C."/>
            <person name="Stankiewicz P."/>
            <person name="Steward C."/>
            <person name="Swarbreck D."/>
            <person name="Venkataraman V."/>
            <person name="Whittaker C.A."/>
            <person name="Yang X."/>
            <person name="Zimmer A.R."/>
            <person name="Bradley A."/>
            <person name="Hubbard T."/>
            <person name="Birren B.W."/>
            <person name="Rogers J."/>
            <person name="Lander E.S."/>
            <person name="Nusbaum C."/>
        </authorList>
    </citation>
    <scope>NUCLEOTIDE SEQUENCE [LARGE SCALE GENOMIC DNA]</scope>
</reference>
<reference key="3">
    <citation type="journal article" date="2004" name="Genome Res.">
        <title>The status, quality, and expansion of the NIH full-length cDNA project: the Mammalian Gene Collection (MGC).</title>
        <authorList>
            <consortium name="The MGC Project Team"/>
        </authorList>
    </citation>
    <scope>NUCLEOTIDE SEQUENCE [LARGE SCALE MRNA] OF 147-581</scope>
</reference>
<reference key="4">
    <citation type="journal article" date="2000" name="J. Neuroimmunol.">
        <title>Expression of SOCS genes in normal and leukemic human leukocytes stimulated by prolactin, growth hormone and cytokines.</title>
        <authorList>
            <person name="Dogusan Z."/>
            <person name="Hooghe-Peters E.L."/>
            <person name="Berus D."/>
            <person name="Velkeniers B."/>
            <person name="Hooghe R."/>
        </authorList>
    </citation>
    <scope>INDUCTION</scope>
</reference>
<reference key="5">
    <citation type="journal article" date="2004" name="Exp. Cell Res.">
        <title>The suppressor of cytokine signaling (SOCS)-7 interacts with the actin cytoskeleton through vinexin.</title>
        <authorList>
            <person name="Martens N."/>
            <person name="Wery M."/>
            <person name="Wang P."/>
            <person name="Braet F."/>
            <person name="Gertler A."/>
            <person name="Hooghe R."/>
            <person name="Vandenhaute J."/>
            <person name="Hooghe-Peters E.L."/>
        </authorList>
    </citation>
    <scope>INTERACTION WITH SORBS3</scope>
    <scope>SUBCELLULAR LOCATION</scope>
</reference>
<reference key="6">
    <citation type="journal article" date="2005" name="J. Biol. Chem.">
        <title>Suppressor of cytokine signaling 7 inhibits prolactin, growth hormone, and leptin signaling by interacting with STAT5 or STAT3 and attenuating their nuclear translocation.</title>
        <authorList>
            <person name="Martens N."/>
            <person name="Uzan G."/>
            <person name="Wery M."/>
            <person name="Hooghe R."/>
            <person name="Hooghe-Peters E.L."/>
            <person name="Gertler A."/>
        </authorList>
    </citation>
    <scope>FUNCTION</scope>
    <scope>INTERACTION WITH STAT3 AND STAT5</scope>
</reference>
<reference key="7">
    <citation type="journal article" date="2005" name="J. Clin. Invest.">
        <title>Deletion of SOCS7 leads to enhanced insulin action and enlarged islets of Langerhans.</title>
        <authorList>
            <person name="Banks A.S."/>
            <person name="Li J."/>
            <person name="McKeag L."/>
            <person name="Hribal M.L."/>
            <person name="Kashiwada M."/>
            <person name="Accili D."/>
            <person name="Rothman P.B."/>
        </authorList>
    </citation>
    <scope>FUNCTION</scope>
    <scope>PATHWAY</scope>
    <scope>INTERACTION WITH INSR</scope>
    <scope>MUTAGENESIS OF 425-ARG--SER-427</scope>
</reference>
<reference key="8">
    <citation type="journal article" date="2007" name="Cell">
        <title>Septins regulate actin organization and cell-cycle arrest through nuclear accumulation of NCK mediated by SOCS7.</title>
        <authorList>
            <person name="Kremer B.E."/>
            <person name="Adang L.A."/>
            <person name="Macara I.G."/>
        </authorList>
    </citation>
    <scope>INTERACTION WITH SEPT6</scope>
    <scope>SUBCELLULAR LOCATION</scope>
</reference>
<gene>
    <name evidence="12 15" type="primary">SOCS7</name>
    <name evidence="13" type="synonym">NAP4</name>
    <name type="synonym">SOCS6</name>
</gene>
<sequence>MVFRNVGRPPEEEDVEAAPEPGPSELLCPRHRCALDPKALPPGLALERTWGPAAGLEAQLAALGLGQPAGPGVKTVGGGCCPCPCPPQPPPPQPQPPAAAPQAGEDPTETSDALLVLEGLESEAESLETNSCSEEELSSPGRGGGGGGRLLLQPPGPELPPVPFPLQDLVPLGRLSRGEQQQQQQQQPPPPPPPPGPLRPLAGPSRKGSFKIRLSRLFRTKSCNGGSGGGDGTGKRPSGELAASAASLTDMGGSAGRELDAGRKPKLTRTQSAFSPVSFSPLFTGETVSLVDVDISQRGLTSPHPPTPPPPPRRSLSLLDDISGTLPTSVLVAPMGSSLQSFPLPPPPPPHAPDAFPRIAPIRAAESLHSQPPQHLQCPLYRPDSSSFAASLRELEKCGWYWGPMNWEDAEMKLKGKPDGSFLVRDSSDPRYILSLSFRSQGITHHTRMEHYRGTFSLWCHPKFEDRCQSVVEFIKRAIMHSKNGKFLYFLRSRVPGLPPTPVQLLYPVSRFSNVKSLQHLCRFRIRQLVRIDHIPDLPLPKPLISYIRKFYYYDPQEEVYLSLKEAQLISKQKQEVEPST</sequence>